<gene>
    <name type="ORF">IIV3-120R</name>
</gene>
<evidence type="ECO:0000305" key="1"/>
<dbReference type="EC" id="2.7.7.7"/>
<dbReference type="EMBL" id="DQ643392">
    <property type="protein sequence ID" value="ABF82150.1"/>
    <property type="molecule type" value="Genomic_DNA"/>
</dbReference>
<dbReference type="RefSeq" id="YP_654692.1">
    <property type="nucleotide sequence ID" value="NC_008187.1"/>
</dbReference>
<dbReference type="SMR" id="Q196U0"/>
<dbReference type="KEGG" id="vg:4156331"/>
<dbReference type="Proteomes" id="UP000001358">
    <property type="component" value="Genome"/>
</dbReference>
<dbReference type="GO" id="GO:0008296">
    <property type="term" value="F:3'-5'-DNA exonuclease activity"/>
    <property type="evidence" value="ECO:0007669"/>
    <property type="project" value="TreeGrafter"/>
</dbReference>
<dbReference type="GO" id="GO:0003677">
    <property type="term" value="F:DNA binding"/>
    <property type="evidence" value="ECO:0007669"/>
    <property type="project" value="UniProtKB-KW"/>
</dbReference>
<dbReference type="GO" id="GO:0003887">
    <property type="term" value="F:DNA-directed DNA polymerase activity"/>
    <property type="evidence" value="ECO:0007669"/>
    <property type="project" value="UniProtKB-KW"/>
</dbReference>
<dbReference type="GO" id="GO:0000166">
    <property type="term" value="F:nucleotide binding"/>
    <property type="evidence" value="ECO:0007669"/>
    <property type="project" value="InterPro"/>
</dbReference>
<dbReference type="GO" id="GO:0006287">
    <property type="term" value="P:base-excision repair, gap-filling"/>
    <property type="evidence" value="ECO:0007669"/>
    <property type="project" value="TreeGrafter"/>
</dbReference>
<dbReference type="GO" id="GO:0045004">
    <property type="term" value="P:DNA replication proofreading"/>
    <property type="evidence" value="ECO:0007669"/>
    <property type="project" value="TreeGrafter"/>
</dbReference>
<dbReference type="GO" id="GO:0006297">
    <property type="term" value="P:nucleotide-excision repair, DNA gap filling"/>
    <property type="evidence" value="ECO:0007669"/>
    <property type="project" value="TreeGrafter"/>
</dbReference>
<dbReference type="GO" id="GO:0039693">
    <property type="term" value="P:viral DNA genome replication"/>
    <property type="evidence" value="ECO:0007669"/>
    <property type="project" value="UniProtKB-KW"/>
</dbReference>
<dbReference type="Gene3D" id="1.10.132.60">
    <property type="entry name" value="DNA polymerase family B, C-terminal domain"/>
    <property type="match status" value="1"/>
</dbReference>
<dbReference type="Gene3D" id="1.10.287.690">
    <property type="entry name" value="Helix hairpin bin"/>
    <property type="match status" value="1"/>
</dbReference>
<dbReference type="Gene3D" id="3.90.1600.10">
    <property type="entry name" value="Palm domain of DNA polymerase"/>
    <property type="match status" value="1"/>
</dbReference>
<dbReference type="Gene3D" id="3.30.420.10">
    <property type="entry name" value="Ribonuclease H-like superfamily/Ribonuclease H"/>
    <property type="match status" value="1"/>
</dbReference>
<dbReference type="InterPro" id="IPR006172">
    <property type="entry name" value="DNA-dir_DNA_pol_B"/>
</dbReference>
<dbReference type="InterPro" id="IPR006133">
    <property type="entry name" value="DNA-dir_DNA_pol_B_exonuc"/>
</dbReference>
<dbReference type="InterPro" id="IPR006134">
    <property type="entry name" value="DNA-dir_DNA_pol_B_multi_dom"/>
</dbReference>
<dbReference type="InterPro" id="IPR043502">
    <property type="entry name" value="DNA/RNA_pol_sf"/>
</dbReference>
<dbReference type="InterPro" id="IPR042087">
    <property type="entry name" value="DNA_pol_B_thumb"/>
</dbReference>
<dbReference type="InterPro" id="IPR023211">
    <property type="entry name" value="DNA_pol_palm_dom_sf"/>
</dbReference>
<dbReference type="InterPro" id="IPR050240">
    <property type="entry name" value="DNA_pol_type-B"/>
</dbReference>
<dbReference type="InterPro" id="IPR012337">
    <property type="entry name" value="RNaseH-like_sf"/>
</dbReference>
<dbReference type="InterPro" id="IPR036397">
    <property type="entry name" value="RNaseH_sf"/>
</dbReference>
<dbReference type="PANTHER" id="PTHR10322">
    <property type="entry name" value="DNA POLYMERASE CATALYTIC SUBUNIT"/>
    <property type="match status" value="1"/>
</dbReference>
<dbReference type="PANTHER" id="PTHR10322:SF23">
    <property type="entry name" value="DNA POLYMERASE DELTA CATALYTIC SUBUNIT"/>
    <property type="match status" value="1"/>
</dbReference>
<dbReference type="Pfam" id="PF00136">
    <property type="entry name" value="DNA_pol_B"/>
    <property type="match status" value="1"/>
</dbReference>
<dbReference type="Pfam" id="PF03104">
    <property type="entry name" value="DNA_pol_B_exo1"/>
    <property type="match status" value="1"/>
</dbReference>
<dbReference type="PRINTS" id="PR00106">
    <property type="entry name" value="DNAPOLB"/>
</dbReference>
<dbReference type="SMART" id="SM00486">
    <property type="entry name" value="POLBc"/>
    <property type="match status" value="1"/>
</dbReference>
<dbReference type="SUPFAM" id="SSF56672">
    <property type="entry name" value="DNA/RNA polymerases"/>
    <property type="match status" value="1"/>
</dbReference>
<dbReference type="SUPFAM" id="SSF53098">
    <property type="entry name" value="Ribonuclease H-like"/>
    <property type="match status" value="1"/>
</dbReference>
<protein>
    <recommendedName>
        <fullName>DNA polymerase 120R</fullName>
        <ecNumber>2.7.7.7</ecNumber>
    </recommendedName>
</protein>
<sequence>MDKPSTKIVNDYTHFYAYSWHVDEESVDETFIRVYGLDEANENVCVSVNGFRQFVWVELPSFIDWSLSHNVDRVVRYFEQTWPNVGVQFKMYRKLYGANLKQSRSNGEYVHKKFPFLQCSSMSWKMLKFTLPTALKTPQRIMGLGSIKFRVHGQDACPRLQLTSKYNLPTAGWIQFKGIEILDQDVKFSQSCREFMVDLSDKNWGKPSTMICRSDKTTVPRPLILSFDLEVNSEEVVTMPKATKPGDVVFQISCIFNRLGGVENEVERYLLSLGNPTEQIVGATILRYSTEKKLLMGFRDLVNEKNPNVITGYNIFNFDIPYLMDRTVYKSIFVEWAQQGFAKNRPGIPREIRWSSSAYKNQEFKYLDCEGRLYIDLLPVVQRDFKLNDYKLKTVSTFFIGETKDDLDPTSIFRCYREGTRDDSPKASHFMSICGKYCMQDSMLVYKLFEKLNVWYGLSEMAVVCNVPMITLFTKGQQIKVYSQLYKYCLAAKIIPEKDGYIVAENERYVGAHVFTPKPGLYENVIPLDFSSLYPSLMIAYNIDYSTCAFDASIPDQLCHIMEWEDHIGCAHDPKVVEKERLTQLINTLKNKEEVSRMRKERSEITKSLSKNVMCEKRKYRFLKSTTEDGRFKGVLPTIVQNMLDARKETRAEMGRLKKRLGTAVGEEATHLQTQIAILNQRQLAYKVSANSMYGITGVKAGMLPFMPVAMSITFMGRTNIARVAQLLQTQYQGELVYGDTDSNYVSFNHKNMSMSELWDYAIRVADEISQQFPPPIKLEFEEAIYSKFLILTKKRYLYQTALRDGTIKKEIGKRGVVLNRRDNSGFIRKIYQNMVDSIFNHVAGEGRDLKSVVLDVVTADICALFNHQFPVDDFVITKSTGNYGDLQPENFVNEKGVPRAMLGQYNVPCLTSQVREEERIETEEQEQNWYLDKLPAHIQLLEKIRRRGQMKNEGGRLEYVIVETNSLKDKQSTKIETLPYYTKNRGILKLDYLYYLHRCINPLDQILKVVFDLDDFVKRQYKAREAKKKVTLELGELFRPNFIIEKSQLQLVRARADEVYRLVYGTAADCRAQLGELGPDWCVRAKFEYVPLVDDPYRYFQQKYGATGSLKTKFDFEGRDIRLNNQPESKLVSTLKREFK</sequence>
<proteinExistence type="inferred from homology"/>
<name>DPOL_IIV3</name>
<organism>
    <name type="scientific">Invertebrate iridescent virus 3</name>
    <name type="common">IIV-3</name>
    <name type="synonym">Mosquito iridescent virus</name>
    <dbReference type="NCBI Taxonomy" id="345201"/>
    <lineage>
        <taxon>Viruses</taxon>
        <taxon>Varidnaviria</taxon>
        <taxon>Bamfordvirae</taxon>
        <taxon>Nucleocytoviricota</taxon>
        <taxon>Megaviricetes</taxon>
        <taxon>Pimascovirales</taxon>
        <taxon>Iridoviridae</taxon>
        <taxon>Betairidovirinae</taxon>
        <taxon>Chloriridovirus</taxon>
    </lineage>
</organism>
<accession>Q196U0</accession>
<feature type="chain" id="PRO_0000376942" description="DNA polymerase 120R">
    <location>
        <begin position="1"/>
        <end position="1141"/>
    </location>
</feature>
<reference key="1">
    <citation type="journal article" date="2006" name="J. Virol.">
        <title>Genome of invertebrate iridescent virus type 3 (mosquito iridescent virus).</title>
        <authorList>
            <person name="Delhon G."/>
            <person name="Tulman E.R."/>
            <person name="Afonso C.L."/>
            <person name="Lu Z."/>
            <person name="Becnel J.J."/>
            <person name="Moser B.A."/>
            <person name="Kutish G.F."/>
            <person name="Rock D.L."/>
        </authorList>
    </citation>
    <scope>NUCLEOTIDE SEQUENCE [LARGE SCALE GENOMIC DNA]</scope>
</reference>
<comment type="function">
    <text>DNA-directed DNA polymerase involved in viral DNA replication.</text>
</comment>
<comment type="catalytic activity">
    <reaction>
        <text>DNA(n) + a 2'-deoxyribonucleoside 5'-triphosphate = DNA(n+1) + diphosphate</text>
        <dbReference type="Rhea" id="RHEA:22508"/>
        <dbReference type="Rhea" id="RHEA-COMP:17339"/>
        <dbReference type="Rhea" id="RHEA-COMP:17340"/>
        <dbReference type="ChEBI" id="CHEBI:33019"/>
        <dbReference type="ChEBI" id="CHEBI:61560"/>
        <dbReference type="ChEBI" id="CHEBI:173112"/>
        <dbReference type="EC" id="2.7.7.7"/>
    </reaction>
</comment>
<comment type="similarity">
    <text evidence="1">Belongs to the DNA polymerase type-B family.</text>
</comment>
<organismHost>
    <name type="scientific">Aedes vexans</name>
    <name type="common">Inland floodwater mosquito</name>
    <name type="synonym">Culex vexans</name>
    <dbReference type="NCBI Taxonomy" id="7163"/>
</organismHost>
<organismHost>
    <name type="scientific">Culex territans</name>
    <dbReference type="NCBI Taxonomy" id="42431"/>
</organismHost>
<organismHost>
    <name type="scientific">Culiseta annulata</name>
    <dbReference type="NCBI Taxonomy" id="332058"/>
</organismHost>
<organismHost>
    <name type="scientific">Ochlerotatus sollicitans</name>
    <name type="common">eastern saltmarsh mosquito</name>
    <dbReference type="NCBI Taxonomy" id="310513"/>
</organismHost>
<organismHost>
    <name type="scientific">Ochlerotatus taeniorhynchus</name>
    <name type="common">Black salt marsh mosquito</name>
    <name type="synonym">Aedes taeniorhynchus</name>
    <dbReference type="NCBI Taxonomy" id="329105"/>
</organismHost>
<organismHost>
    <name type="scientific">Psorophora ferox</name>
    <dbReference type="NCBI Taxonomy" id="7183"/>
</organismHost>
<keyword id="KW-0235">DNA replication</keyword>
<keyword id="KW-0238">DNA-binding</keyword>
<keyword id="KW-0239">DNA-directed DNA polymerase</keyword>
<keyword id="KW-0548">Nucleotidyltransferase</keyword>
<keyword id="KW-1185">Reference proteome</keyword>
<keyword id="KW-0808">Transferase</keyword>
<keyword id="KW-1194">Viral DNA replication</keyword>